<accession>B0BVQ3</accession>
<protein>
    <recommendedName>
        <fullName evidence="1">Oxygen-dependent coproporphyrinogen-III oxidase</fullName>
        <shortName evidence="1">CPO</shortName>
        <shortName evidence="1">Coprogen oxidase</shortName>
        <shortName evidence="1">Coproporphyrinogenase</shortName>
        <ecNumber evidence="1">1.3.3.3</ecNumber>
    </recommendedName>
</protein>
<comment type="function">
    <text evidence="1">Involved in the heme biosynthesis. Catalyzes the aerobic oxidative decarboxylation of propionate groups of rings A and B of coproporphyrinogen-III to yield the vinyl groups in protoporphyrinogen-IX.</text>
</comment>
<comment type="catalytic activity">
    <reaction evidence="1">
        <text>coproporphyrinogen III + O2 + 2 H(+) = protoporphyrinogen IX + 2 CO2 + 2 H2O</text>
        <dbReference type="Rhea" id="RHEA:18257"/>
        <dbReference type="ChEBI" id="CHEBI:15377"/>
        <dbReference type="ChEBI" id="CHEBI:15378"/>
        <dbReference type="ChEBI" id="CHEBI:15379"/>
        <dbReference type="ChEBI" id="CHEBI:16526"/>
        <dbReference type="ChEBI" id="CHEBI:57307"/>
        <dbReference type="ChEBI" id="CHEBI:57309"/>
        <dbReference type="EC" id="1.3.3.3"/>
    </reaction>
</comment>
<comment type="cofactor">
    <cofactor evidence="1">
        <name>a divalent metal cation</name>
        <dbReference type="ChEBI" id="CHEBI:60240"/>
    </cofactor>
</comment>
<comment type="pathway">
    <text evidence="1">Porphyrin-containing compound metabolism; protoporphyrin-IX biosynthesis; protoporphyrinogen-IX from coproporphyrinogen-III (O2 route): step 1/1.</text>
</comment>
<comment type="subunit">
    <text evidence="1">Homodimer.</text>
</comment>
<comment type="subcellular location">
    <subcellularLocation>
        <location evidence="1">Cytoplasm</location>
    </subcellularLocation>
</comment>
<comment type="similarity">
    <text evidence="1">Belongs to the aerobic coproporphyrinogen-III oxidase family.</text>
</comment>
<proteinExistence type="inferred from homology"/>
<reference key="1">
    <citation type="journal article" date="2008" name="Infect. Immun.">
        <title>Genomic comparison of virulent Rickettsia rickettsii Sheila Smith and avirulent Rickettsia rickettsii Iowa.</title>
        <authorList>
            <person name="Ellison D.W."/>
            <person name="Clark T.R."/>
            <person name="Sturdevant D.E."/>
            <person name="Virtaneva K."/>
            <person name="Porcella S.F."/>
            <person name="Hackstadt T."/>
        </authorList>
    </citation>
    <scope>NUCLEOTIDE SEQUENCE [LARGE SCALE GENOMIC DNA]</scope>
    <source>
        <strain>Iowa</strain>
    </source>
</reference>
<keyword id="KW-0963">Cytoplasm</keyword>
<keyword id="KW-0350">Heme biosynthesis</keyword>
<keyword id="KW-0479">Metal-binding</keyword>
<keyword id="KW-0560">Oxidoreductase</keyword>
<keyword id="KW-0627">Porphyrin biosynthesis</keyword>
<dbReference type="EC" id="1.3.3.3" evidence="1"/>
<dbReference type="EMBL" id="CP000766">
    <property type="protein sequence ID" value="ABY73313.1"/>
    <property type="molecule type" value="Genomic_DNA"/>
</dbReference>
<dbReference type="RefSeq" id="WP_012151472.1">
    <property type="nucleotide sequence ID" value="NC_010263.3"/>
</dbReference>
<dbReference type="SMR" id="B0BVQ3"/>
<dbReference type="GeneID" id="79937959"/>
<dbReference type="KEGG" id="rrj:RrIowa_1598"/>
<dbReference type="eggNOG" id="COG0408">
    <property type="taxonomic scope" value="Bacteria"/>
</dbReference>
<dbReference type="HOGENOM" id="CLU_026169_0_1_5"/>
<dbReference type="UniPathway" id="UPA00251">
    <property type="reaction ID" value="UER00322"/>
</dbReference>
<dbReference type="Proteomes" id="UP000000796">
    <property type="component" value="Chromosome"/>
</dbReference>
<dbReference type="GO" id="GO:0005737">
    <property type="term" value="C:cytoplasm"/>
    <property type="evidence" value="ECO:0007669"/>
    <property type="project" value="UniProtKB-SubCell"/>
</dbReference>
<dbReference type="GO" id="GO:0004109">
    <property type="term" value="F:coproporphyrinogen oxidase activity"/>
    <property type="evidence" value="ECO:0007669"/>
    <property type="project" value="UniProtKB-UniRule"/>
</dbReference>
<dbReference type="GO" id="GO:0046872">
    <property type="term" value="F:metal ion binding"/>
    <property type="evidence" value="ECO:0007669"/>
    <property type="project" value="UniProtKB-KW"/>
</dbReference>
<dbReference type="GO" id="GO:0042803">
    <property type="term" value="F:protein homodimerization activity"/>
    <property type="evidence" value="ECO:0000250"/>
    <property type="project" value="UniProtKB"/>
</dbReference>
<dbReference type="GO" id="GO:0006782">
    <property type="term" value="P:protoporphyrinogen IX biosynthetic process"/>
    <property type="evidence" value="ECO:0007669"/>
    <property type="project" value="UniProtKB-UniRule"/>
</dbReference>
<dbReference type="FunFam" id="3.40.1500.10:FF:000005">
    <property type="entry name" value="Oxygen-dependent coproporphyrinogen-III oxidase"/>
    <property type="match status" value="1"/>
</dbReference>
<dbReference type="Gene3D" id="3.40.1500.10">
    <property type="entry name" value="Coproporphyrinogen III oxidase, aerobic"/>
    <property type="match status" value="1"/>
</dbReference>
<dbReference type="HAMAP" id="MF_00333">
    <property type="entry name" value="Coprogen_oxidas"/>
    <property type="match status" value="1"/>
</dbReference>
<dbReference type="InterPro" id="IPR001260">
    <property type="entry name" value="Coprogen_oxidase_aer"/>
</dbReference>
<dbReference type="InterPro" id="IPR036406">
    <property type="entry name" value="Coprogen_oxidase_aer_sf"/>
</dbReference>
<dbReference type="InterPro" id="IPR018375">
    <property type="entry name" value="Coprogen_oxidase_CS"/>
</dbReference>
<dbReference type="NCBIfam" id="NF003727">
    <property type="entry name" value="PRK05330.1"/>
    <property type="match status" value="1"/>
</dbReference>
<dbReference type="PANTHER" id="PTHR10755">
    <property type="entry name" value="COPROPORPHYRINOGEN III OXIDASE, MITOCHONDRIAL"/>
    <property type="match status" value="1"/>
</dbReference>
<dbReference type="PANTHER" id="PTHR10755:SF0">
    <property type="entry name" value="OXYGEN-DEPENDENT COPROPORPHYRINOGEN-III OXIDASE, MITOCHONDRIAL"/>
    <property type="match status" value="1"/>
</dbReference>
<dbReference type="Pfam" id="PF01218">
    <property type="entry name" value="Coprogen_oxidas"/>
    <property type="match status" value="1"/>
</dbReference>
<dbReference type="PIRSF" id="PIRSF000166">
    <property type="entry name" value="Coproporphyri_ox"/>
    <property type="match status" value="1"/>
</dbReference>
<dbReference type="PRINTS" id="PR00073">
    <property type="entry name" value="COPRGNOXDASE"/>
</dbReference>
<dbReference type="SUPFAM" id="SSF102886">
    <property type="entry name" value="Coproporphyrinogen III oxidase"/>
    <property type="match status" value="1"/>
</dbReference>
<dbReference type="PROSITE" id="PS01021">
    <property type="entry name" value="COPROGEN_OXIDASE"/>
    <property type="match status" value="1"/>
</dbReference>
<sequence>MNIENKEITSSWFTNLRDLLCKEFEKIEEEYAQTKGLKPAKFVRSSWQRNGGGGGVMSLMKGAVFEKVGVNISTVFGKISPEFRNEIPGAELDGKFFATGISLVAHLKSPLIPAMHFNTRYIETSKSWFGGGGDLTPFYPEKNETVKFHAAFKEVCDKYDSSYYPKFKKQCDEYFYLKHRKEPRGVGGIFYDYLNNGNFEQDFAFTQDVGKTLLSVYPEIVRSKLFLPWTAEQKEYQLIRRGRYVEFNLLYDRGTKFGLMTDGNVEAILMSLPPEVKFN</sequence>
<organism>
    <name type="scientific">Rickettsia rickettsii (strain Iowa)</name>
    <dbReference type="NCBI Taxonomy" id="452659"/>
    <lineage>
        <taxon>Bacteria</taxon>
        <taxon>Pseudomonadati</taxon>
        <taxon>Pseudomonadota</taxon>
        <taxon>Alphaproteobacteria</taxon>
        <taxon>Rickettsiales</taxon>
        <taxon>Rickettsiaceae</taxon>
        <taxon>Rickettsieae</taxon>
        <taxon>Rickettsia</taxon>
        <taxon>spotted fever group</taxon>
    </lineage>
</organism>
<gene>
    <name evidence="1" type="primary">hemF</name>
    <name type="ordered locus">RrIowa_1598</name>
</gene>
<evidence type="ECO:0000255" key="1">
    <source>
        <dbReference type="HAMAP-Rule" id="MF_00333"/>
    </source>
</evidence>
<feature type="chain" id="PRO_1000079259" description="Oxygen-dependent coproporphyrinogen-III oxidase">
    <location>
        <begin position="1"/>
        <end position="279"/>
    </location>
</feature>
<feature type="region of interest" description="Important for dimerization" evidence="1">
    <location>
        <begin position="244"/>
        <end position="279"/>
    </location>
</feature>
<feature type="active site" description="Proton donor" evidence="1">
    <location>
        <position position="116"/>
    </location>
</feature>
<feature type="binding site" evidence="1">
    <location>
        <position position="102"/>
    </location>
    <ligand>
        <name>substrate</name>
    </ligand>
</feature>
<feature type="binding site" evidence="1">
    <location>
        <position position="106"/>
    </location>
    <ligand>
        <name>a divalent metal cation</name>
        <dbReference type="ChEBI" id="CHEBI:60240"/>
    </ligand>
</feature>
<feature type="binding site" evidence="1">
    <location>
        <position position="116"/>
    </location>
    <ligand>
        <name>a divalent metal cation</name>
        <dbReference type="ChEBI" id="CHEBI:60240"/>
    </ligand>
</feature>
<feature type="binding site" evidence="1">
    <location>
        <begin position="118"/>
        <end position="120"/>
    </location>
    <ligand>
        <name>substrate</name>
    </ligand>
</feature>
<feature type="binding site" evidence="1">
    <location>
        <position position="149"/>
    </location>
    <ligand>
        <name>a divalent metal cation</name>
        <dbReference type="ChEBI" id="CHEBI:60240"/>
    </ligand>
</feature>
<feature type="binding site" evidence="1">
    <location>
        <position position="179"/>
    </location>
    <ligand>
        <name>a divalent metal cation</name>
        <dbReference type="ChEBI" id="CHEBI:60240"/>
    </ligand>
</feature>
<feature type="site" description="Important for dimerization" evidence="1">
    <location>
        <position position="179"/>
    </location>
</feature>
<name>HEM6_RICRO</name>